<evidence type="ECO:0000250" key="1"/>
<evidence type="ECO:0000255" key="2"/>
<evidence type="ECO:0000305" key="3"/>
<accession>Q9LH73</accession>
<keyword id="KW-0325">Glycoprotein</keyword>
<keyword id="KW-0378">Hydrolase</keyword>
<keyword id="KW-0442">Lipid degradation</keyword>
<keyword id="KW-0443">Lipid metabolism</keyword>
<keyword id="KW-1185">Reference proteome</keyword>
<keyword id="KW-0964">Secreted</keyword>
<keyword id="KW-0732">Signal</keyword>
<comment type="subcellular location">
    <subcellularLocation>
        <location evidence="3">Secreted</location>
    </subcellularLocation>
</comment>
<comment type="similarity">
    <text evidence="3">Belongs to the 'GDSL' lipolytic enzyme family.</text>
</comment>
<comment type="sequence caution" evidence="3">
    <conflict type="erroneous gene model prediction">
        <sequence resource="EMBL-CDS" id="BAB02648"/>
    </conflict>
</comment>
<organism>
    <name type="scientific">Arabidopsis thaliana</name>
    <name type="common">Mouse-ear cress</name>
    <dbReference type="NCBI Taxonomy" id="3702"/>
    <lineage>
        <taxon>Eukaryota</taxon>
        <taxon>Viridiplantae</taxon>
        <taxon>Streptophyta</taxon>
        <taxon>Embryophyta</taxon>
        <taxon>Tracheophyta</taxon>
        <taxon>Spermatophyta</taxon>
        <taxon>Magnoliopsida</taxon>
        <taxon>eudicotyledons</taxon>
        <taxon>Gunneridae</taxon>
        <taxon>Pentapetalae</taxon>
        <taxon>rosids</taxon>
        <taxon>malvids</taxon>
        <taxon>Brassicales</taxon>
        <taxon>Brassicaceae</taxon>
        <taxon>Camelineae</taxon>
        <taxon>Arabidopsis</taxon>
    </lineage>
</organism>
<feature type="signal peptide" evidence="2">
    <location>
        <begin position="1"/>
        <end position="22"/>
    </location>
</feature>
<feature type="chain" id="PRO_0000367393" description="GDSL esterase/lipase At3g14820">
    <location>
        <begin position="23"/>
        <end position="351"/>
    </location>
</feature>
<feature type="active site" description="Nucleophile" evidence="1">
    <location>
        <position position="39"/>
    </location>
</feature>
<feature type="active site" evidence="1">
    <location>
        <position position="325"/>
    </location>
</feature>
<feature type="active site" evidence="1">
    <location>
        <position position="328"/>
    </location>
</feature>
<feature type="glycosylation site" description="N-linked (GlcNAc...) asparagine" evidence="2">
    <location>
        <position position="25"/>
    </location>
</feature>
<proteinExistence type="inferred from homology"/>
<reference key="1">
    <citation type="journal article" date="2000" name="DNA Res.">
        <title>Structural analysis of Arabidopsis thaliana chromosome 3. II. Sequence features of the 4,251,695 bp regions covered by 90 P1, TAC and BAC clones.</title>
        <authorList>
            <person name="Kaneko T."/>
            <person name="Katoh T."/>
            <person name="Sato S."/>
            <person name="Nakamura Y."/>
            <person name="Asamizu E."/>
            <person name="Tabata S."/>
        </authorList>
    </citation>
    <scope>NUCLEOTIDE SEQUENCE [LARGE SCALE GENOMIC DNA]</scope>
    <source>
        <strain>cv. Columbia</strain>
    </source>
</reference>
<reference key="2">
    <citation type="journal article" date="2017" name="Plant J.">
        <title>Araport11: a complete reannotation of the Arabidopsis thaliana reference genome.</title>
        <authorList>
            <person name="Cheng C.Y."/>
            <person name="Krishnakumar V."/>
            <person name="Chan A.P."/>
            <person name="Thibaud-Nissen F."/>
            <person name="Schobel S."/>
            <person name="Town C.D."/>
        </authorList>
    </citation>
    <scope>GENOME REANNOTATION</scope>
    <source>
        <strain>cv. Columbia</strain>
    </source>
</reference>
<reference key="3">
    <citation type="journal article" date="2004" name="Prog. Lipid Res.">
        <title>GDSL family of serine esterases/lipases.</title>
        <authorList>
            <person name="Akoh C.C."/>
            <person name="Lee G.-C."/>
            <person name="Liaw Y.-C."/>
            <person name="Huang T.-H."/>
            <person name="Shaw J.-F."/>
        </authorList>
    </citation>
    <scope>REVIEW</scope>
</reference>
<reference key="4">
    <citation type="journal article" date="2008" name="Pak. J. Biol. Sci.">
        <title>Sequence analysis of GDSL lipase gene family in Arabidopsis thaliana.</title>
        <authorList>
            <person name="Ling H."/>
        </authorList>
    </citation>
    <scope>GENE FAMILY</scope>
</reference>
<protein>
    <recommendedName>
        <fullName>GDSL esterase/lipase At3g14820</fullName>
        <ecNumber>3.1.1.-</ecNumber>
    </recommendedName>
    <alternativeName>
        <fullName>Extracellular lipase At3g14820</fullName>
    </alternativeName>
</protein>
<gene>
    <name type="ordered locus">At3g14820</name>
    <name type="ORF">T21E2.10</name>
</gene>
<dbReference type="EC" id="3.1.1.-"/>
<dbReference type="EMBL" id="AP002061">
    <property type="protein sequence ID" value="BAB02648.1"/>
    <property type="status" value="ALT_SEQ"/>
    <property type="molecule type" value="Genomic_DNA"/>
</dbReference>
<dbReference type="EMBL" id="CP002686">
    <property type="protein sequence ID" value="AEE75570.1"/>
    <property type="molecule type" value="Genomic_DNA"/>
</dbReference>
<dbReference type="RefSeq" id="NP_188100.2">
    <property type="nucleotide sequence ID" value="NM_112343.2"/>
</dbReference>
<dbReference type="SMR" id="Q9LH73"/>
<dbReference type="FunCoup" id="Q9LH73">
    <property type="interactions" value="97"/>
</dbReference>
<dbReference type="GlyGen" id="Q9LH73">
    <property type="glycosylation" value="1 site"/>
</dbReference>
<dbReference type="PaxDb" id="3702-AT3G14820.1"/>
<dbReference type="ProteomicsDB" id="224761"/>
<dbReference type="EnsemblPlants" id="AT3G14820.1">
    <property type="protein sequence ID" value="AT3G14820.1"/>
    <property type="gene ID" value="AT3G14820"/>
</dbReference>
<dbReference type="GeneID" id="820711"/>
<dbReference type="Gramene" id="AT3G14820.1">
    <property type="protein sequence ID" value="AT3G14820.1"/>
    <property type="gene ID" value="AT3G14820"/>
</dbReference>
<dbReference type="KEGG" id="ath:AT3G14820"/>
<dbReference type="Araport" id="AT3G14820"/>
<dbReference type="TAIR" id="AT3G14820"/>
<dbReference type="eggNOG" id="ENOG502SJTB">
    <property type="taxonomic scope" value="Eukaryota"/>
</dbReference>
<dbReference type="HOGENOM" id="CLU_015101_0_1_1"/>
<dbReference type="InParanoid" id="Q9LH73"/>
<dbReference type="OMA" id="NNMALHF"/>
<dbReference type="PhylomeDB" id="Q9LH73"/>
<dbReference type="BioCyc" id="ARA:AT3G14820-MONOMER"/>
<dbReference type="PRO" id="PR:Q9LH73"/>
<dbReference type="Proteomes" id="UP000006548">
    <property type="component" value="Chromosome 3"/>
</dbReference>
<dbReference type="ExpressionAtlas" id="Q9LH73">
    <property type="expression patterns" value="baseline and differential"/>
</dbReference>
<dbReference type="GO" id="GO:0005576">
    <property type="term" value="C:extracellular region"/>
    <property type="evidence" value="ECO:0007669"/>
    <property type="project" value="UniProtKB-SubCell"/>
</dbReference>
<dbReference type="GO" id="GO:0016298">
    <property type="term" value="F:lipase activity"/>
    <property type="evidence" value="ECO:0007669"/>
    <property type="project" value="InterPro"/>
</dbReference>
<dbReference type="GO" id="GO:0016042">
    <property type="term" value="P:lipid catabolic process"/>
    <property type="evidence" value="ECO:0007669"/>
    <property type="project" value="UniProtKB-KW"/>
</dbReference>
<dbReference type="CDD" id="cd01837">
    <property type="entry name" value="SGNH_plant_lipase_like"/>
    <property type="match status" value="1"/>
</dbReference>
<dbReference type="FunFam" id="3.40.50.1110:FF:000003">
    <property type="entry name" value="GDSL esterase/lipase APG"/>
    <property type="match status" value="1"/>
</dbReference>
<dbReference type="Gene3D" id="3.40.50.1110">
    <property type="entry name" value="SGNH hydrolase"/>
    <property type="match status" value="1"/>
</dbReference>
<dbReference type="InterPro" id="IPR001087">
    <property type="entry name" value="GDSL"/>
</dbReference>
<dbReference type="InterPro" id="IPR050592">
    <property type="entry name" value="GDSL_lipolytic_enzyme"/>
</dbReference>
<dbReference type="InterPro" id="IPR008265">
    <property type="entry name" value="Lipase_GDSL_AS"/>
</dbReference>
<dbReference type="InterPro" id="IPR036514">
    <property type="entry name" value="SGNH_hydro_sf"/>
</dbReference>
<dbReference type="InterPro" id="IPR035669">
    <property type="entry name" value="SGNH_plant_lipase-like"/>
</dbReference>
<dbReference type="PANTHER" id="PTHR45642:SF106">
    <property type="entry name" value="(RAPE) HYPOTHETICAL PROTEIN"/>
    <property type="match status" value="1"/>
</dbReference>
<dbReference type="PANTHER" id="PTHR45642">
    <property type="entry name" value="GDSL ESTERASE/LIPASE EXL3"/>
    <property type="match status" value="1"/>
</dbReference>
<dbReference type="Pfam" id="PF00657">
    <property type="entry name" value="Lipase_GDSL"/>
    <property type="match status" value="1"/>
</dbReference>
<dbReference type="PROSITE" id="PS01098">
    <property type="entry name" value="LIPASE_GDSL_SER"/>
    <property type="match status" value="1"/>
</dbReference>
<sequence length="351" mass="39194">MDLHLIGFLLWFFVVQVTTSSAHRNITTTIPALIVFGDSIMDTGNNNDIPTLLKSNFPPYGRDFPGAIPTGRFSDGKVPSDIIAESLGIAKTLPPYLGSNLKPHDLLKGVIFASGGSGYDPLTSTLLSVVSMSDQLKYFQEYLAKIKQHFGEEKVKFILEKSVFLVVSSSNDLAETYWVRSVEYDRNSYAEYLVELASEFIKELSELGAKNIGLFSGVPVGCLPAQRTLFGGFERKCYEKLNNMALHFNSKLSSSLDTLKKELPSRLIFIDVYDTLLDIIKNPTNYGFKVADKGCCGTGKIELMELCNKFTPFTCSDASTHVFFDSYHPSEKAYQIITHKLLAKYRKYLNT</sequence>
<name>GDL52_ARATH</name>